<gene>
    <name type="ordered locus">NGR_a03940</name>
    <name type="ORF">y4dW</name>
</gene>
<feature type="chain" id="PRO_0000200825" description="Uncharacterized protein y4dW">
    <location>
        <begin position="1"/>
        <end position="204"/>
    </location>
</feature>
<feature type="domain" description="WGR" evidence="1">
    <location>
        <begin position="88"/>
        <end position="175"/>
    </location>
</feature>
<feature type="region of interest" description="Disordered" evidence="2">
    <location>
        <begin position="1"/>
        <end position="37"/>
    </location>
</feature>
<feature type="region of interest" description="Disordered" evidence="2">
    <location>
        <begin position="159"/>
        <end position="204"/>
    </location>
</feature>
<feature type="compositionally biased region" description="Low complexity" evidence="2">
    <location>
        <begin position="28"/>
        <end position="37"/>
    </location>
</feature>
<feature type="compositionally biased region" description="Basic and acidic residues" evidence="2">
    <location>
        <begin position="166"/>
        <end position="179"/>
    </location>
</feature>
<feature type="compositionally biased region" description="Basic and acidic residues" evidence="2">
    <location>
        <begin position="188"/>
        <end position="204"/>
    </location>
</feature>
<evidence type="ECO:0000255" key="1">
    <source>
        <dbReference type="PROSITE-ProRule" id="PRU01321"/>
    </source>
</evidence>
<evidence type="ECO:0000256" key="2">
    <source>
        <dbReference type="SAM" id="MobiDB-lite"/>
    </source>
</evidence>
<dbReference type="EMBL" id="U00090">
    <property type="protein sequence ID" value="AAB92443.1"/>
    <property type="molecule type" value="Genomic_DNA"/>
</dbReference>
<dbReference type="RefSeq" id="NP_443832.1">
    <property type="nucleotide sequence ID" value="NC_000914.2"/>
</dbReference>
<dbReference type="SMR" id="P55422"/>
<dbReference type="KEGG" id="rhi:NGR_a03940"/>
<dbReference type="PATRIC" id="fig|394.7.peg.415"/>
<dbReference type="eggNOG" id="COG3831">
    <property type="taxonomic scope" value="Bacteria"/>
</dbReference>
<dbReference type="HOGENOM" id="CLU_1342347_0_0_5"/>
<dbReference type="OrthoDB" id="5801306at2"/>
<dbReference type="Proteomes" id="UP000001054">
    <property type="component" value="Plasmid pNGR234a"/>
</dbReference>
<dbReference type="CDD" id="cd07996">
    <property type="entry name" value="WGR_MMR_like"/>
    <property type="match status" value="1"/>
</dbReference>
<dbReference type="Gene3D" id="2.20.140.10">
    <property type="entry name" value="WGR domain"/>
    <property type="match status" value="1"/>
</dbReference>
<dbReference type="InterPro" id="IPR036930">
    <property type="entry name" value="WGR_dom_sf"/>
</dbReference>
<dbReference type="InterPro" id="IPR008893">
    <property type="entry name" value="WGR_domain"/>
</dbReference>
<dbReference type="InterPro" id="IPR049809">
    <property type="entry name" value="YehF/YfeS-like_WGR"/>
</dbReference>
<dbReference type="Pfam" id="PF05406">
    <property type="entry name" value="WGR"/>
    <property type="match status" value="1"/>
</dbReference>
<dbReference type="SMART" id="SM00773">
    <property type="entry name" value="WGR"/>
    <property type="match status" value="1"/>
</dbReference>
<dbReference type="SUPFAM" id="SSF142921">
    <property type="entry name" value="WGR domain-like"/>
    <property type="match status" value="1"/>
</dbReference>
<dbReference type="PROSITE" id="PS51977">
    <property type="entry name" value="WGR"/>
    <property type="match status" value="1"/>
</dbReference>
<sequence length="204" mass="22904">MRALPGAGTVCDTAGVTERSRENRHPTGRGPRAGSVSAASRAVRHRRLAQHALSHNISDMNRSVPTDSQVSLDAIVGISDSDLMISQPYRLYVERLDPSRNMARYYAMSIEPNLFGDICLLRKWGRIGTKGQMMVHHFGQEEDAVRLFLDLLRQKRKRGYRPRPSLPKEKWPAEAEHESATSAPVPDPEGHLDLDEERNLDGEL</sequence>
<protein>
    <recommendedName>
        <fullName>Uncharacterized protein y4dW</fullName>
    </recommendedName>
</protein>
<organism>
    <name type="scientific">Sinorhizobium fredii (strain NBRC 101917 / NGR234)</name>
    <dbReference type="NCBI Taxonomy" id="394"/>
    <lineage>
        <taxon>Bacteria</taxon>
        <taxon>Pseudomonadati</taxon>
        <taxon>Pseudomonadota</taxon>
        <taxon>Alphaproteobacteria</taxon>
        <taxon>Hyphomicrobiales</taxon>
        <taxon>Rhizobiaceae</taxon>
        <taxon>Sinorhizobium/Ensifer group</taxon>
        <taxon>Sinorhizobium</taxon>
    </lineage>
</organism>
<accession>P55422</accession>
<geneLocation type="plasmid">
    <name>sym pNGR234a</name>
</geneLocation>
<proteinExistence type="predicted"/>
<keyword id="KW-0614">Plasmid</keyword>
<keyword id="KW-1185">Reference proteome</keyword>
<reference key="1">
    <citation type="journal article" date="1997" name="Nature">
        <title>Molecular basis of symbiosis between Rhizobium and legumes.</title>
        <authorList>
            <person name="Freiberg C.A."/>
            <person name="Fellay R."/>
            <person name="Bairoch A."/>
            <person name="Broughton W.J."/>
            <person name="Rosenthal A."/>
            <person name="Perret X."/>
        </authorList>
    </citation>
    <scope>NUCLEOTIDE SEQUENCE [LARGE SCALE GENOMIC DNA]</scope>
    <source>
        <strain>NBRC 101917 / NGR234</strain>
    </source>
</reference>
<reference key="2">
    <citation type="journal article" date="2009" name="Appl. Environ. Microbiol.">
        <title>Rhizobium sp. strain NGR234 possesses a remarkable number of secretion systems.</title>
        <authorList>
            <person name="Schmeisser C."/>
            <person name="Liesegang H."/>
            <person name="Krysciak D."/>
            <person name="Bakkou N."/>
            <person name="Le Quere A."/>
            <person name="Wollherr A."/>
            <person name="Heinemeyer I."/>
            <person name="Morgenstern B."/>
            <person name="Pommerening-Roeser A."/>
            <person name="Flores M."/>
            <person name="Palacios R."/>
            <person name="Brenner S."/>
            <person name="Gottschalk G."/>
            <person name="Schmitz R.A."/>
            <person name="Broughton W.J."/>
            <person name="Perret X."/>
            <person name="Strittmatter A.W."/>
            <person name="Streit W.R."/>
        </authorList>
    </citation>
    <scope>NUCLEOTIDE SEQUENCE [LARGE SCALE GENOMIC DNA]</scope>
    <source>
        <strain>NBRC 101917 / NGR234</strain>
    </source>
</reference>
<name>Y4DW_SINFN</name>